<reference key="1">
    <citation type="journal article" date="1997" name="Mol. Biol. Evol.">
        <title>The mtDNA sequence of the ostrich and the divergence between paleognathous and neognathous birds.</title>
        <authorList>
            <person name="Harlid A."/>
            <person name="Janke A."/>
            <person name="Arnason U."/>
        </authorList>
    </citation>
    <scope>NUCLEOTIDE SEQUENCE [GENOMIC DNA]</scope>
</reference>
<reference key="2">
    <citation type="journal article" date="2001" name="Proc. R. Soc. B">
        <title>Complete mitochondrial DNA genome sequences of extinct birds: ratite phylogenetics and the vicariance biogeography hypothesis.</title>
        <authorList>
            <person name="Haddrath O."/>
            <person name="Baker A.J."/>
        </authorList>
    </citation>
    <scope>NUCLEOTIDE SEQUENCE [GENOMIC DNA]</scope>
</reference>
<geneLocation type="mitochondrion"/>
<dbReference type="EC" id="7.1.1.2"/>
<dbReference type="EMBL" id="Y12025">
    <property type="protein sequence ID" value="CAA72756.1"/>
    <property type="molecule type" value="Genomic_DNA"/>
</dbReference>
<dbReference type="EMBL" id="AF338715">
    <property type="protein sequence ID" value="AAK53357.1"/>
    <property type="molecule type" value="Genomic_DNA"/>
</dbReference>
<dbReference type="PIR" id="E90613">
    <property type="entry name" value="E90613"/>
</dbReference>
<dbReference type="PIR" id="T11531">
    <property type="entry name" value="T11531"/>
</dbReference>
<dbReference type="RefSeq" id="NP_115453.1">
    <property type="nucleotide sequence ID" value="NC_002785.1"/>
</dbReference>
<dbReference type="SMR" id="O21407"/>
<dbReference type="GeneID" id="803277"/>
<dbReference type="CTD" id="4541"/>
<dbReference type="GO" id="GO:0031966">
    <property type="term" value="C:mitochondrial membrane"/>
    <property type="evidence" value="ECO:0007669"/>
    <property type="project" value="UniProtKB-SubCell"/>
</dbReference>
<dbReference type="GO" id="GO:0008137">
    <property type="term" value="F:NADH dehydrogenase (ubiquinone) activity"/>
    <property type="evidence" value="ECO:0007669"/>
    <property type="project" value="UniProtKB-EC"/>
</dbReference>
<dbReference type="Gene3D" id="1.20.120.1200">
    <property type="entry name" value="NADH-ubiquinone/plastoquinone oxidoreductase chain 6, subunit NuoJ"/>
    <property type="match status" value="1"/>
</dbReference>
<dbReference type="InterPro" id="IPR050269">
    <property type="entry name" value="ComplexI_Subunit6"/>
</dbReference>
<dbReference type="InterPro" id="IPR001457">
    <property type="entry name" value="NADH_UbQ/plastoQ_OxRdtase_su6"/>
</dbReference>
<dbReference type="InterPro" id="IPR042106">
    <property type="entry name" value="Nuo/plastoQ_OxRdtase_6_NuoJ"/>
</dbReference>
<dbReference type="PANTHER" id="PTHR11435">
    <property type="entry name" value="NADH UBIQUINONE OXIDOREDUCTASE SUBUNIT ND6"/>
    <property type="match status" value="1"/>
</dbReference>
<dbReference type="PANTHER" id="PTHR11435:SF1">
    <property type="entry name" value="NADH-UBIQUINONE OXIDOREDUCTASE CHAIN 6"/>
    <property type="match status" value="1"/>
</dbReference>
<dbReference type="Pfam" id="PF00499">
    <property type="entry name" value="Oxidored_q3"/>
    <property type="match status" value="1"/>
</dbReference>
<evidence type="ECO:0000250" key="1"/>
<evidence type="ECO:0000255" key="2"/>
<evidence type="ECO:0000305" key="3"/>
<name>NU6M_STRCA</name>
<accession>O21407</accession>
<accession>Q957X3</accession>
<organism>
    <name type="scientific">Struthio camelus</name>
    <name type="common">Common ostrich</name>
    <dbReference type="NCBI Taxonomy" id="8801"/>
    <lineage>
        <taxon>Eukaryota</taxon>
        <taxon>Metazoa</taxon>
        <taxon>Chordata</taxon>
        <taxon>Craniata</taxon>
        <taxon>Vertebrata</taxon>
        <taxon>Euteleostomi</taxon>
        <taxon>Archelosauria</taxon>
        <taxon>Archosauria</taxon>
        <taxon>Dinosauria</taxon>
        <taxon>Saurischia</taxon>
        <taxon>Theropoda</taxon>
        <taxon>Coelurosauria</taxon>
        <taxon>Aves</taxon>
        <taxon>Palaeognathae</taxon>
        <taxon>Struthioniformes</taxon>
        <taxon>Struthionidae</taxon>
        <taxon>Struthio</taxon>
    </lineage>
</organism>
<proteinExistence type="inferred from homology"/>
<keyword id="KW-0249">Electron transport</keyword>
<keyword id="KW-0472">Membrane</keyword>
<keyword id="KW-0496">Mitochondrion</keyword>
<keyword id="KW-0520">NAD</keyword>
<keyword id="KW-0679">Respiratory chain</keyword>
<keyword id="KW-1278">Translocase</keyword>
<keyword id="KW-0812">Transmembrane</keyword>
<keyword id="KW-1133">Transmembrane helix</keyword>
<keyword id="KW-0813">Transport</keyword>
<keyword id="KW-0830">Ubiquinone</keyword>
<protein>
    <recommendedName>
        <fullName>NADH-ubiquinone oxidoreductase chain 6</fullName>
        <ecNumber>7.1.1.2</ecNumber>
    </recommendedName>
    <alternativeName>
        <fullName>NADH dehydrogenase subunit 6</fullName>
    </alternativeName>
</protein>
<sequence>MTYFVMFLGFCFILGAVAVASNPSPYYGVLGLVVGSVVGCGWLLSLGVSFISLALFLVYLGGMLVVFVYSVSLAADPYPQAWGSWQVVIYGVGLVLVVLVGIVVGDFVGVWNLWVGTVDYGGLGAVRLDFSGVALFYSWGAGLFLVAGWGLLLTLFVVLELVRGLSRGAIRAV</sequence>
<comment type="function">
    <text evidence="1">Core subunit of the mitochondrial membrane respiratory chain NADH dehydrogenase (Complex I) that is believed to belong to the minimal assembly required for catalysis. Complex I functions in the transfer of electrons from NADH to the respiratory chain. The immediate electron acceptor for the enzyme is believed to be ubiquinone (By similarity).</text>
</comment>
<comment type="catalytic activity">
    <reaction>
        <text>a ubiquinone + NADH + 5 H(+)(in) = a ubiquinol + NAD(+) + 4 H(+)(out)</text>
        <dbReference type="Rhea" id="RHEA:29091"/>
        <dbReference type="Rhea" id="RHEA-COMP:9565"/>
        <dbReference type="Rhea" id="RHEA-COMP:9566"/>
        <dbReference type="ChEBI" id="CHEBI:15378"/>
        <dbReference type="ChEBI" id="CHEBI:16389"/>
        <dbReference type="ChEBI" id="CHEBI:17976"/>
        <dbReference type="ChEBI" id="CHEBI:57540"/>
        <dbReference type="ChEBI" id="CHEBI:57945"/>
        <dbReference type="EC" id="7.1.1.2"/>
    </reaction>
</comment>
<comment type="subcellular location">
    <subcellularLocation>
        <location evidence="3">Mitochondrion membrane</location>
        <topology evidence="3">Multi-pass membrane protein</topology>
    </subcellularLocation>
</comment>
<comment type="similarity">
    <text evidence="3">Belongs to the complex I subunit 6 family.</text>
</comment>
<feature type="chain" id="PRO_0000118336" description="NADH-ubiquinone oxidoreductase chain 6">
    <location>
        <begin position="1"/>
        <end position="173"/>
    </location>
</feature>
<feature type="transmembrane region" description="Helical" evidence="2">
    <location>
        <begin position="1"/>
        <end position="21"/>
    </location>
</feature>
<feature type="transmembrane region" description="Helical" evidence="2">
    <location>
        <begin position="27"/>
        <end position="47"/>
    </location>
</feature>
<feature type="transmembrane region" description="Helical" evidence="2">
    <location>
        <begin position="48"/>
        <end position="68"/>
    </location>
</feature>
<feature type="transmembrane region" description="Helical" evidence="2">
    <location>
        <begin position="87"/>
        <end position="107"/>
    </location>
</feature>
<feature type="transmembrane region" description="Helical" evidence="2">
    <location>
        <begin position="139"/>
        <end position="159"/>
    </location>
</feature>
<feature type="sequence conflict" description="In Ref. 1; CAA72756." evidence="3" ref="1">
    <original>F</original>
    <variation>S</variation>
    <location>
        <position position="12"/>
    </location>
</feature>
<feature type="sequence conflict" description="In Ref. 1; CAA72756." evidence="3" ref="1">
    <original>V</original>
    <variation>G</variation>
    <location>
        <position position="19"/>
    </location>
</feature>
<gene>
    <name type="primary">MT-ND6</name>
    <name type="synonym">MTND6</name>
    <name type="synonym">NADH6</name>
    <name type="synonym">ND6</name>
</gene>